<name>RF1_MYCBP</name>
<evidence type="ECO:0000255" key="1">
    <source>
        <dbReference type="HAMAP-Rule" id="MF_00093"/>
    </source>
</evidence>
<accession>A1KI87</accession>
<proteinExistence type="inferred from homology"/>
<sequence length="357" mass="39036">MTQPVQTIDVLLAEHAELELALADPALHSNPAEARRVGRRFARLAPIVATHRKLTSARDDLETARELVASDESFAAEVAALEARVGELDAQLTDMLAPRDPHDADDIVLEVKSGEGGEESALFAADLARMYIRYAERHGWAVTVLDETTSDLGGYKDATLAIASKADTPDGVWSRMKFEGGVHRVQRVPVTESQGRVHTSAAGVLVYPEPEEVGQVQIDESDLRIDVFRSSGKGGQGVNTTDSAVRITHLPTGIVVTCQNERSQLQNKTRALQVLAARLQAMAEEQALADASADRASQIRTVDRSERIRTYNFPENRITDHRIGYKSHNLDQVLDGDLDALFDALSAADKQSRLRQS</sequence>
<organism>
    <name type="scientific">Mycobacterium bovis (strain BCG / Pasteur 1173P2)</name>
    <dbReference type="NCBI Taxonomy" id="410289"/>
    <lineage>
        <taxon>Bacteria</taxon>
        <taxon>Bacillati</taxon>
        <taxon>Actinomycetota</taxon>
        <taxon>Actinomycetes</taxon>
        <taxon>Mycobacteriales</taxon>
        <taxon>Mycobacteriaceae</taxon>
        <taxon>Mycobacterium</taxon>
        <taxon>Mycobacterium tuberculosis complex</taxon>
    </lineage>
</organism>
<feature type="chain" id="PRO_1000004914" description="Peptide chain release factor 1">
    <location>
        <begin position="1"/>
        <end position="357"/>
    </location>
</feature>
<feature type="modified residue" description="N5-methylglutamine" evidence="1">
    <location>
        <position position="236"/>
    </location>
</feature>
<gene>
    <name evidence="1" type="primary">prfA</name>
    <name type="ordered locus">BCG_1359</name>
</gene>
<protein>
    <recommendedName>
        <fullName evidence="1">Peptide chain release factor 1</fullName>
        <shortName evidence="1">RF-1</shortName>
    </recommendedName>
</protein>
<dbReference type="EMBL" id="AM408590">
    <property type="protein sequence ID" value="CAL71346.1"/>
    <property type="molecule type" value="Genomic_DNA"/>
</dbReference>
<dbReference type="RefSeq" id="WP_003406670.1">
    <property type="nucleotide sequence ID" value="NC_008769.1"/>
</dbReference>
<dbReference type="SMR" id="A1KI87"/>
<dbReference type="GeneID" id="45425273"/>
<dbReference type="KEGG" id="mbb:BCG_1359"/>
<dbReference type="HOGENOM" id="CLU_036856_0_1_11"/>
<dbReference type="Proteomes" id="UP000001472">
    <property type="component" value="Chromosome"/>
</dbReference>
<dbReference type="GO" id="GO:0005737">
    <property type="term" value="C:cytoplasm"/>
    <property type="evidence" value="ECO:0007669"/>
    <property type="project" value="UniProtKB-SubCell"/>
</dbReference>
<dbReference type="GO" id="GO:0016149">
    <property type="term" value="F:translation release factor activity, codon specific"/>
    <property type="evidence" value="ECO:0007669"/>
    <property type="project" value="UniProtKB-UniRule"/>
</dbReference>
<dbReference type="FunFam" id="3.30.160.20:FF:000004">
    <property type="entry name" value="Peptide chain release factor 1"/>
    <property type="match status" value="1"/>
</dbReference>
<dbReference type="Gene3D" id="3.30.160.20">
    <property type="match status" value="1"/>
</dbReference>
<dbReference type="Gene3D" id="3.30.70.1660">
    <property type="match status" value="1"/>
</dbReference>
<dbReference type="Gene3D" id="6.10.140.1950">
    <property type="match status" value="1"/>
</dbReference>
<dbReference type="HAMAP" id="MF_00093">
    <property type="entry name" value="Rel_fac_1"/>
    <property type="match status" value="1"/>
</dbReference>
<dbReference type="InterPro" id="IPR005139">
    <property type="entry name" value="PCRF"/>
</dbReference>
<dbReference type="InterPro" id="IPR000352">
    <property type="entry name" value="Pep_chain_release_fac_I"/>
</dbReference>
<dbReference type="InterPro" id="IPR045853">
    <property type="entry name" value="Pep_chain_release_fac_I_sf"/>
</dbReference>
<dbReference type="InterPro" id="IPR050057">
    <property type="entry name" value="Prokaryotic/Mito_RF"/>
</dbReference>
<dbReference type="InterPro" id="IPR004373">
    <property type="entry name" value="RF-1"/>
</dbReference>
<dbReference type="NCBIfam" id="TIGR00019">
    <property type="entry name" value="prfA"/>
    <property type="match status" value="1"/>
</dbReference>
<dbReference type="NCBIfam" id="NF001859">
    <property type="entry name" value="PRK00591.1"/>
    <property type="match status" value="1"/>
</dbReference>
<dbReference type="PANTHER" id="PTHR43804">
    <property type="entry name" value="LD18447P"/>
    <property type="match status" value="1"/>
</dbReference>
<dbReference type="PANTHER" id="PTHR43804:SF7">
    <property type="entry name" value="LD18447P"/>
    <property type="match status" value="1"/>
</dbReference>
<dbReference type="Pfam" id="PF03462">
    <property type="entry name" value="PCRF"/>
    <property type="match status" value="1"/>
</dbReference>
<dbReference type="Pfam" id="PF00472">
    <property type="entry name" value="RF-1"/>
    <property type="match status" value="1"/>
</dbReference>
<dbReference type="SMART" id="SM00937">
    <property type="entry name" value="PCRF"/>
    <property type="match status" value="1"/>
</dbReference>
<dbReference type="SUPFAM" id="SSF75620">
    <property type="entry name" value="Release factor"/>
    <property type="match status" value="1"/>
</dbReference>
<dbReference type="PROSITE" id="PS00745">
    <property type="entry name" value="RF_PROK_I"/>
    <property type="match status" value="1"/>
</dbReference>
<keyword id="KW-0963">Cytoplasm</keyword>
<keyword id="KW-0488">Methylation</keyword>
<keyword id="KW-0648">Protein biosynthesis</keyword>
<comment type="function">
    <text evidence="1">Peptide chain release factor 1 directs the termination of translation in response to the peptide chain termination codons UAG and UAA.</text>
</comment>
<comment type="subcellular location">
    <subcellularLocation>
        <location evidence="1">Cytoplasm</location>
    </subcellularLocation>
</comment>
<comment type="PTM">
    <text evidence="1">Methylated by PrmC. Methylation increases the termination efficiency of RF1.</text>
</comment>
<comment type="similarity">
    <text evidence="1">Belongs to the prokaryotic/mitochondrial release factor family.</text>
</comment>
<reference key="1">
    <citation type="journal article" date="2007" name="Proc. Natl. Acad. Sci. U.S.A.">
        <title>Genome plasticity of BCG and impact on vaccine efficacy.</title>
        <authorList>
            <person name="Brosch R."/>
            <person name="Gordon S.V."/>
            <person name="Garnier T."/>
            <person name="Eiglmeier K."/>
            <person name="Frigui W."/>
            <person name="Valenti P."/>
            <person name="Dos Santos S."/>
            <person name="Duthoy S."/>
            <person name="Lacroix C."/>
            <person name="Garcia-Pelayo C."/>
            <person name="Inwald J.K."/>
            <person name="Golby P."/>
            <person name="Garcia J.N."/>
            <person name="Hewinson R.G."/>
            <person name="Behr M.A."/>
            <person name="Quail M.A."/>
            <person name="Churcher C."/>
            <person name="Barrell B.G."/>
            <person name="Parkhill J."/>
            <person name="Cole S.T."/>
        </authorList>
    </citation>
    <scope>NUCLEOTIDE SEQUENCE [LARGE SCALE GENOMIC DNA]</scope>
    <source>
        <strain>BCG / Pasteur 1173P2</strain>
    </source>
</reference>